<reference key="1">
    <citation type="journal article" date="1991" name="Agric. Biol. Chem.">
        <title>Cloning and nucleotide sequences of the AccI restriction-modification genes in Acinetobacter calcoaceticus.</title>
        <authorList>
            <person name="Kawakami B."/>
            <person name="Hilzheber C."/>
            <person name="Nagatomo M."/>
            <person name="Oka M."/>
        </authorList>
    </citation>
    <scope>NUCLEOTIDE SEQUENCE [GENOMIC DNA]</scope>
    <source>
        <strain>ATCC 49823</strain>
    </source>
</reference>
<reference key="2">
    <citation type="journal article" date="2003" name="Nucleic Acids Res.">
        <title>A nomenclature for restriction enzymes, DNA methyltransferases, homing endonucleases and their genes.</title>
        <authorList>
            <person name="Roberts R.J."/>
            <person name="Belfort M."/>
            <person name="Bestor T."/>
            <person name="Bhagwat A.S."/>
            <person name="Bickle T.A."/>
            <person name="Bitinaite J."/>
            <person name="Blumenthal R.M."/>
            <person name="Degtyarev S.K."/>
            <person name="Dryden D.T."/>
            <person name="Dybvig K."/>
            <person name="Firman K."/>
            <person name="Gromova E.S."/>
            <person name="Gumport R.I."/>
            <person name="Halford S.E."/>
            <person name="Hattman S."/>
            <person name="Heitman J."/>
            <person name="Hornby D.P."/>
            <person name="Janulaitis A."/>
            <person name="Jeltsch A."/>
            <person name="Josephsen J."/>
            <person name="Kiss A."/>
            <person name="Klaenhammer T.R."/>
            <person name="Kobayashi I."/>
            <person name="Kong H."/>
            <person name="Krueger D.H."/>
            <person name="Lacks S."/>
            <person name="Marinus M.G."/>
            <person name="Miyahara M."/>
            <person name="Morgan R.D."/>
            <person name="Murray N.E."/>
            <person name="Nagaraja V."/>
            <person name="Piekarowicz A."/>
            <person name="Pingoud A."/>
            <person name="Raleigh E."/>
            <person name="Rao D.N."/>
            <person name="Reich N."/>
            <person name="Repin V.E."/>
            <person name="Selker E.U."/>
            <person name="Shaw P.C."/>
            <person name="Stein D.C."/>
            <person name="Stoddard B.L."/>
            <person name="Szybalski W."/>
            <person name="Trautner T.A."/>
            <person name="Van Etten J.L."/>
            <person name="Vitor J.M."/>
            <person name="Wilson G.G."/>
            <person name="Xu S.Y."/>
        </authorList>
    </citation>
    <scope>NOMENCLATURE</scope>
    <scope>SUBTYPE</scope>
</reference>
<feature type="chain" id="PRO_0000087941" description="Type II methyltransferase M.AccI">
    <location>
        <begin position="1"/>
        <end position="540"/>
    </location>
</feature>
<keyword id="KW-0238">DNA-binding</keyword>
<keyword id="KW-0489">Methyltransferase</keyword>
<keyword id="KW-0680">Restriction system</keyword>
<keyword id="KW-0949">S-adenosyl-L-methionine</keyword>
<keyword id="KW-0808">Transferase</keyword>
<proteinExistence type="inferred from homology"/>
<dbReference type="EC" id="2.1.1.72"/>
<dbReference type="EMBL" id="D10671">
    <property type="protein sequence ID" value="BAA01523.1"/>
    <property type="molecule type" value="Genomic_DNA"/>
</dbReference>
<dbReference type="PIR" id="JU0470">
    <property type="entry name" value="JU0470"/>
</dbReference>
<dbReference type="SMR" id="P25201"/>
<dbReference type="REBASE" id="3271">
    <property type="entry name" value="M.AccI"/>
</dbReference>
<dbReference type="PRO" id="PR:P25201"/>
<dbReference type="GO" id="GO:0003677">
    <property type="term" value="F:DNA binding"/>
    <property type="evidence" value="ECO:0007669"/>
    <property type="project" value="UniProtKB-KW"/>
</dbReference>
<dbReference type="GO" id="GO:0009007">
    <property type="term" value="F:site-specific DNA-methyltransferase (adenine-specific) activity"/>
    <property type="evidence" value="ECO:0007669"/>
    <property type="project" value="UniProtKB-EC"/>
</dbReference>
<dbReference type="GO" id="GO:0009307">
    <property type="term" value="P:DNA restriction-modification system"/>
    <property type="evidence" value="ECO:0007669"/>
    <property type="project" value="UniProtKB-KW"/>
</dbReference>
<dbReference type="GO" id="GO:0032259">
    <property type="term" value="P:methylation"/>
    <property type="evidence" value="ECO:0007669"/>
    <property type="project" value="UniProtKB-KW"/>
</dbReference>
<dbReference type="CDD" id="cd02440">
    <property type="entry name" value="AdoMet_MTases"/>
    <property type="match status" value="1"/>
</dbReference>
<dbReference type="Gene3D" id="3.40.50.150">
    <property type="entry name" value="Vaccinia Virus protein VP39"/>
    <property type="match status" value="1"/>
</dbReference>
<dbReference type="InterPro" id="IPR002052">
    <property type="entry name" value="DNA_methylase_N6_adenine_CS"/>
</dbReference>
<dbReference type="InterPro" id="IPR011639">
    <property type="entry name" value="MethylTrfase_TaqI-like_dom"/>
</dbReference>
<dbReference type="InterPro" id="IPR050953">
    <property type="entry name" value="N4_N6_ade-DNA_methylase"/>
</dbReference>
<dbReference type="InterPro" id="IPR029063">
    <property type="entry name" value="SAM-dependent_MTases_sf"/>
</dbReference>
<dbReference type="PANTHER" id="PTHR33841:SF5">
    <property type="entry name" value="DNA METHYLASE (MODIFICATION METHYLASE) (METHYLTRANSFERASE)-RELATED"/>
    <property type="match status" value="1"/>
</dbReference>
<dbReference type="PANTHER" id="PTHR33841">
    <property type="entry name" value="DNA METHYLTRANSFERASE YEEA-RELATED"/>
    <property type="match status" value="1"/>
</dbReference>
<dbReference type="Pfam" id="PF07669">
    <property type="entry name" value="Eco57I"/>
    <property type="match status" value="1"/>
</dbReference>
<dbReference type="PRINTS" id="PR00507">
    <property type="entry name" value="N12N6MTFRASE"/>
</dbReference>
<dbReference type="SUPFAM" id="SSF53335">
    <property type="entry name" value="S-adenosyl-L-methionine-dependent methyltransferases"/>
    <property type="match status" value="1"/>
</dbReference>
<dbReference type="PROSITE" id="PS00092">
    <property type="entry name" value="N6_MTASE"/>
    <property type="match status" value="1"/>
</dbReference>
<comment type="function">
    <text evidence="1">A gamma subtype methylase, recognizes the double-stranded sequence 5'-GTMKAC-3', methylates A-5 on both strands, and protects the DNA from cleavage by the AccI endonuclease.</text>
</comment>
<comment type="catalytic activity">
    <reaction>
        <text>a 2'-deoxyadenosine in DNA + S-adenosyl-L-methionine = an N(6)-methyl-2'-deoxyadenosine in DNA + S-adenosyl-L-homocysteine + H(+)</text>
        <dbReference type="Rhea" id="RHEA:15197"/>
        <dbReference type="Rhea" id="RHEA-COMP:12418"/>
        <dbReference type="Rhea" id="RHEA-COMP:12419"/>
        <dbReference type="ChEBI" id="CHEBI:15378"/>
        <dbReference type="ChEBI" id="CHEBI:57856"/>
        <dbReference type="ChEBI" id="CHEBI:59789"/>
        <dbReference type="ChEBI" id="CHEBI:90615"/>
        <dbReference type="ChEBI" id="CHEBI:90616"/>
        <dbReference type="EC" id="2.1.1.72"/>
    </reaction>
</comment>
<comment type="subunit">
    <text>Monomer.</text>
</comment>
<comment type="similarity">
    <text evidence="2">Belongs to the N(4)/N(6)-methyltransferase family.</text>
</comment>
<accession>P25201</accession>
<name>MTA1_ACICA</name>
<evidence type="ECO:0000303" key="1">
    <source>
    </source>
</evidence>
<evidence type="ECO:0000305" key="2"/>
<gene>
    <name type="primary">accIM</name>
</gene>
<protein>
    <recommendedName>
        <fullName evidence="1">Type II methyltransferase M.AccI</fullName>
        <shortName evidence="1">M.AccI</shortName>
        <ecNumber>2.1.1.72</ecNumber>
    </recommendedName>
    <alternativeName>
        <fullName>Adenine-specific methyltransferase AccI</fullName>
    </alternativeName>
    <alternativeName>
        <fullName>Modification methylase AccI</fullName>
    </alternativeName>
</protein>
<sequence>MIKTTEHIVNNSIERDYSKSISLEHRKKFAQFFTPFPIAYAMAKWILGNKQLKTVLEPAFGLGVFSRAILSQQKEINIKAFEVDETIFENAKEYFDDFENVNILLQDYMYNDWKNKYDGIICNPPYFKFHDYDNKNILKEIETNLKCKLNGFTNLYTLFLLKSIHQLSQNGRCAYIIPSEFLNSDYGKLVKTYLIKSKTLRHIIVIDFEENVFDDALTTASIILCANDNITDKVQFNNIQSLQDLSKIDEIINKYPNFLETEQTYNFSDLNPEIKWKAYYQKQNSIKFKNLVPFSTYAKVVRGIATGSNEYFTFNLSKAKEFNIDEQYLLPCICSAKDAKTSFFTKQDFEELKKSDKSVFLFNAQNSTDKNISSYIQKGESEEINKRFLTASRTPWYSLENRKPAPIWVSVFNRSGLRFIRNEANISNLTSYHCIIQNKQVVSEIDIDLLFAYLLTDTAKQIFEDNSRQYGNGLQKFEPNDLNKGMMLDLGLLDKQTSDEILNLYKEYKYLILDNKNGDEIINKIDKILTDKYSEKKHWA</sequence>
<organism>
    <name type="scientific">Acinetobacter calcoaceticus</name>
    <dbReference type="NCBI Taxonomy" id="471"/>
    <lineage>
        <taxon>Bacteria</taxon>
        <taxon>Pseudomonadati</taxon>
        <taxon>Pseudomonadota</taxon>
        <taxon>Gammaproteobacteria</taxon>
        <taxon>Moraxellales</taxon>
        <taxon>Moraxellaceae</taxon>
        <taxon>Acinetobacter</taxon>
        <taxon>Acinetobacter calcoaceticus/baumannii complex</taxon>
    </lineage>
</organism>